<proteinExistence type="inferred from homology"/>
<feature type="chain" id="PRO_1000115961" description="Probable GTP-binding protein EngB">
    <location>
        <begin position="1"/>
        <end position="192"/>
    </location>
</feature>
<feature type="domain" description="EngB-type G" evidence="1">
    <location>
        <begin position="22"/>
        <end position="192"/>
    </location>
</feature>
<feature type="binding site" evidence="1">
    <location>
        <begin position="30"/>
        <end position="37"/>
    </location>
    <ligand>
        <name>GTP</name>
        <dbReference type="ChEBI" id="CHEBI:37565"/>
    </ligand>
</feature>
<feature type="binding site" evidence="1">
    <location>
        <position position="37"/>
    </location>
    <ligand>
        <name>Mg(2+)</name>
        <dbReference type="ChEBI" id="CHEBI:18420"/>
    </ligand>
</feature>
<feature type="binding site" evidence="1">
    <location>
        <begin position="57"/>
        <end position="61"/>
    </location>
    <ligand>
        <name>GTP</name>
        <dbReference type="ChEBI" id="CHEBI:37565"/>
    </ligand>
</feature>
<feature type="binding site" evidence="1">
    <location>
        <position position="59"/>
    </location>
    <ligand>
        <name>Mg(2+)</name>
        <dbReference type="ChEBI" id="CHEBI:18420"/>
    </ligand>
</feature>
<feature type="binding site" evidence="1">
    <location>
        <begin position="75"/>
        <end position="78"/>
    </location>
    <ligand>
        <name>GTP</name>
        <dbReference type="ChEBI" id="CHEBI:37565"/>
    </ligand>
</feature>
<feature type="binding site" evidence="1">
    <location>
        <begin position="142"/>
        <end position="145"/>
    </location>
    <ligand>
        <name>GTP</name>
        <dbReference type="ChEBI" id="CHEBI:37565"/>
    </ligand>
</feature>
<feature type="binding site" evidence="1">
    <location>
        <begin position="172"/>
        <end position="174"/>
    </location>
    <ligand>
        <name>GTP</name>
        <dbReference type="ChEBI" id="CHEBI:37565"/>
    </ligand>
</feature>
<dbReference type="EMBL" id="CP001099">
    <property type="protein sequence ID" value="ACF10643.1"/>
    <property type="molecule type" value="Genomic_DNA"/>
</dbReference>
<dbReference type="RefSeq" id="WP_012501477.1">
    <property type="nucleotide sequence ID" value="NC_011027.1"/>
</dbReference>
<dbReference type="SMR" id="B3QQY9"/>
<dbReference type="STRING" id="517417.Cpar_0216"/>
<dbReference type="KEGG" id="cpc:Cpar_0216"/>
<dbReference type="eggNOG" id="COG0218">
    <property type="taxonomic scope" value="Bacteria"/>
</dbReference>
<dbReference type="HOGENOM" id="CLU_033732_3_0_10"/>
<dbReference type="OrthoDB" id="9804921at2"/>
<dbReference type="Proteomes" id="UP000008811">
    <property type="component" value="Chromosome"/>
</dbReference>
<dbReference type="GO" id="GO:0005829">
    <property type="term" value="C:cytosol"/>
    <property type="evidence" value="ECO:0007669"/>
    <property type="project" value="TreeGrafter"/>
</dbReference>
<dbReference type="GO" id="GO:0005525">
    <property type="term" value="F:GTP binding"/>
    <property type="evidence" value="ECO:0007669"/>
    <property type="project" value="UniProtKB-UniRule"/>
</dbReference>
<dbReference type="GO" id="GO:0046872">
    <property type="term" value="F:metal ion binding"/>
    <property type="evidence" value="ECO:0007669"/>
    <property type="project" value="UniProtKB-KW"/>
</dbReference>
<dbReference type="GO" id="GO:0000917">
    <property type="term" value="P:division septum assembly"/>
    <property type="evidence" value="ECO:0007669"/>
    <property type="project" value="UniProtKB-KW"/>
</dbReference>
<dbReference type="CDD" id="cd01876">
    <property type="entry name" value="YihA_EngB"/>
    <property type="match status" value="1"/>
</dbReference>
<dbReference type="Gene3D" id="3.40.50.300">
    <property type="entry name" value="P-loop containing nucleotide triphosphate hydrolases"/>
    <property type="match status" value="1"/>
</dbReference>
<dbReference type="HAMAP" id="MF_00321">
    <property type="entry name" value="GTPase_EngB"/>
    <property type="match status" value="1"/>
</dbReference>
<dbReference type="InterPro" id="IPR030393">
    <property type="entry name" value="G_ENGB_dom"/>
</dbReference>
<dbReference type="InterPro" id="IPR006073">
    <property type="entry name" value="GTP-bd"/>
</dbReference>
<dbReference type="InterPro" id="IPR019987">
    <property type="entry name" value="GTP-bd_ribosome_bio_YsxC"/>
</dbReference>
<dbReference type="InterPro" id="IPR027417">
    <property type="entry name" value="P-loop_NTPase"/>
</dbReference>
<dbReference type="InterPro" id="IPR005225">
    <property type="entry name" value="Small_GTP-bd"/>
</dbReference>
<dbReference type="NCBIfam" id="TIGR03598">
    <property type="entry name" value="GTPase_YsxC"/>
    <property type="match status" value="1"/>
</dbReference>
<dbReference type="NCBIfam" id="TIGR00231">
    <property type="entry name" value="small_GTP"/>
    <property type="match status" value="1"/>
</dbReference>
<dbReference type="PANTHER" id="PTHR11649:SF13">
    <property type="entry name" value="ENGB-TYPE G DOMAIN-CONTAINING PROTEIN"/>
    <property type="match status" value="1"/>
</dbReference>
<dbReference type="PANTHER" id="PTHR11649">
    <property type="entry name" value="MSS1/TRME-RELATED GTP-BINDING PROTEIN"/>
    <property type="match status" value="1"/>
</dbReference>
<dbReference type="Pfam" id="PF01926">
    <property type="entry name" value="MMR_HSR1"/>
    <property type="match status" value="1"/>
</dbReference>
<dbReference type="SUPFAM" id="SSF52540">
    <property type="entry name" value="P-loop containing nucleoside triphosphate hydrolases"/>
    <property type="match status" value="1"/>
</dbReference>
<dbReference type="PROSITE" id="PS51706">
    <property type="entry name" value="G_ENGB"/>
    <property type="match status" value="1"/>
</dbReference>
<sequence>MNITSADFFCSYSSLNGLPSDGRPEIVFVGRSNVGKSSLLNSLCARKGLAKTSSTPGKTRLINYFLINENLYFVDLPGYGYAKVGHGERESWGKLLTDYVVKRDEIALVVLLVDARHPGMGSDREMMEFLDYCGRPFGIVLTKWDKLKQAEKSKARRTIESCASNARFIVNYSSLSGAGRDKLLERLDLFSQ</sequence>
<evidence type="ECO:0000255" key="1">
    <source>
        <dbReference type="HAMAP-Rule" id="MF_00321"/>
    </source>
</evidence>
<accession>B3QQY9</accession>
<comment type="function">
    <text evidence="1">Necessary for normal cell division and for the maintenance of normal septation.</text>
</comment>
<comment type="cofactor">
    <cofactor evidence="1">
        <name>Mg(2+)</name>
        <dbReference type="ChEBI" id="CHEBI:18420"/>
    </cofactor>
</comment>
<comment type="similarity">
    <text evidence="1">Belongs to the TRAFAC class TrmE-Era-EngA-EngB-Septin-like GTPase superfamily. EngB GTPase family.</text>
</comment>
<gene>
    <name evidence="1" type="primary">engB</name>
    <name type="ordered locus">Cpar_0216</name>
</gene>
<keyword id="KW-0131">Cell cycle</keyword>
<keyword id="KW-0132">Cell division</keyword>
<keyword id="KW-0342">GTP-binding</keyword>
<keyword id="KW-0460">Magnesium</keyword>
<keyword id="KW-0479">Metal-binding</keyword>
<keyword id="KW-0547">Nucleotide-binding</keyword>
<keyword id="KW-0717">Septation</keyword>
<protein>
    <recommendedName>
        <fullName evidence="1">Probable GTP-binding protein EngB</fullName>
    </recommendedName>
</protein>
<organism>
    <name type="scientific">Chlorobaculum parvum (strain DSM 263 / NCIMB 8327)</name>
    <name type="common">Chlorobium vibrioforme subsp. thiosulfatophilum</name>
    <dbReference type="NCBI Taxonomy" id="517417"/>
    <lineage>
        <taxon>Bacteria</taxon>
        <taxon>Pseudomonadati</taxon>
        <taxon>Chlorobiota</taxon>
        <taxon>Chlorobiia</taxon>
        <taxon>Chlorobiales</taxon>
        <taxon>Chlorobiaceae</taxon>
        <taxon>Chlorobaculum</taxon>
    </lineage>
</organism>
<reference key="1">
    <citation type="submission" date="2008-06" db="EMBL/GenBank/DDBJ databases">
        <title>Complete sequence of Chlorobaculum parvum NCIB 8327.</title>
        <authorList>
            <consortium name="US DOE Joint Genome Institute"/>
            <person name="Lucas S."/>
            <person name="Copeland A."/>
            <person name="Lapidus A."/>
            <person name="Glavina del Rio T."/>
            <person name="Dalin E."/>
            <person name="Tice H."/>
            <person name="Bruce D."/>
            <person name="Goodwin L."/>
            <person name="Pitluck S."/>
            <person name="Schmutz J."/>
            <person name="Larimer F."/>
            <person name="Land M."/>
            <person name="Hauser L."/>
            <person name="Kyrpides N."/>
            <person name="Mikhailova N."/>
            <person name="Zhao F."/>
            <person name="Li T."/>
            <person name="Liu Z."/>
            <person name="Overmann J."/>
            <person name="Bryant D.A."/>
            <person name="Richardson P."/>
        </authorList>
    </citation>
    <scope>NUCLEOTIDE SEQUENCE [LARGE SCALE GENOMIC DNA]</scope>
    <source>
        <strain>DSM 263 / NCIMB 8327</strain>
    </source>
</reference>
<name>ENGB_CHLP8</name>